<accession>Q64210</accession>
<organism>
    <name type="scientific">Otospermophilus beecheyi</name>
    <name type="common">California ground squirrel</name>
    <name type="synonym">Spermophilus beecheyi</name>
    <dbReference type="NCBI Taxonomy" id="34862"/>
    <lineage>
        <taxon>Eukaryota</taxon>
        <taxon>Metazoa</taxon>
        <taxon>Chordata</taxon>
        <taxon>Craniata</taxon>
        <taxon>Vertebrata</taxon>
        <taxon>Euteleostomi</taxon>
        <taxon>Mammalia</taxon>
        <taxon>Eutheria</taxon>
        <taxon>Euarchontoglires</taxon>
        <taxon>Glires</taxon>
        <taxon>Rodentia</taxon>
        <taxon>Sciuromorpha</taxon>
        <taxon>Sciuridae</taxon>
        <taxon>Xerinae</taxon>
        <taxon>Marmotini</taxon>
        <taxon>Otospermophilus</taxon>
    </lineage>
</organism>
<feature type="chain" id="PRO_0000127332" description="N-myc 2 proto-oncogene protein">
    <location>
        <begin position="1"/>
        <end position="454"/>
    </location>
</feature>
<feature type="domain" description="bHLH" evidence="1">
    <location>
        <begin position="371"/>
        <end position="423"/>
    </location>
</feature>
<feature type="region of interest" description="Disordered" evidence="2">
    <location>
        <begin position="133"/>
        <end position="166"/>
    </location>
</feature>
<feature type="region of interest" description="Disordered" evidence="2">
    <location>
        <begin position="231"/>
        <end position="270"/>
    </location>
</feature>
<feature type="region of interest" description="Disordered" evidence="2">
    <location>
        <begin position="326"/>
        <end position="374"/>
    </location>
</feature>
<feature type="region of interest" description="Leucine-zipper">
    <location>
        <begin position="423"/>
        <end position="444"/>
    </location>
</feature>
<feature type="compositionally biased region" description="Acidic residues" evidence="2">
    <location>
        <begin position="256"/>
        <end position="270"/>
    </location>
</feature>
<feature type="compositionally biased region" description="Basic and acidic residues" evidence="2">
    <location>
        <begin position="363"/>
        <end position="374"/>
    </location>
</feature>
<reference key="1">
    <citation type="journal article" date="1996" name="Oncogene">
        <title>A functional N-myc2 retroposon in ground squirrels: implications for hepadnavirus-associated carcinogenesis.</title>
        <authorList>
            <person name="Quignon F."/>
            <person name="Renard C.A."/>
            <person name="Tiollais P."/>
            <person name="Buendia M.-A."/>
            <person name="Transy C."/>
        </authorList>
    </citation>
    <scope>NUCLEOTIDE SEQUENCE [GENOMIC DNA]</scope>
    <source>
        <strain>RV53</strain>
        <tissue>Liver</tissue>
    </source>
</reference>
<name>MYC2_OTOBE</name>
<gene>
    <name type="primary">N-MYC2</name>
</gene>
<keyword id="KW-0238">DNA-binding</keyword>
<keyword id="KW-0539">Nucleus</keyword>
<keyword id="KW-0656">Proto-oncogene</keyword>
<comment type="subunit">
    <text>Efficient DNA binding requires dimerization with another bHLH protein.</text>
</comment>
<comment type="subcellular location">
    <subcellularLocation>
        <location evidence="1">Nucleus</location>
    </subcellularLocation>
</comment>
<protein>
    <recommendedName>
        <fullName>N-myc 2 proto-oncogene protein</fullName>
    </recommendedName>
</protein>
<proteinExistence type="inferred from homology"/>
<evidence type="ECO:0000255" key="1">
    <source>
        <dbReference type="PROSITE-ProRule" id="PRU00981"/>
    </source>
</evidence>
<evidence type="ECO:0000256" key="2">
    <source>
        <dbReference type="SAM" id="MobiDB-lite"/>
    </source>
</evidence>
<dbReference type="EMBL" id="X93018">
    <property type="protein sequence ID" value="CAA63600.1"/>
    <property type="molecule type" value="Genomic_DNA"/>
</dbReference>
<dbReference type="SMR" id="Q64210"/>
<dbReference type="GO" id="GO:0005634">
    <property type="term" value="C:nucleus"/>
    <property type="evidence" value="ECO:0007669"/>
    <property type="project" value="UniProtKB-SubCell"/>
</dbReference>
<dbReference type="GO" id="GO:0003677">
    <property type="term" value="F:DNA binding"/>
    <property type="evidence" value="ECO:0007669"/>
    <property type="project" value="UniProtKB-KW"/>
</dbReference>
<dbReference type="GO" id="GO:0003700">
    <property type="term" value="F:DNA-binding transcription factor activity"/>
    <property type="evidence" value="ECO:0007669"/>
    <property type="project" value="InterPro"/>
</dbReference>
<dbReference type="GO" id="GO:0046983">
    <property type="term" value="F:protein dimerization activity"/>
    <property type="evidence" value="ECO:0007669"/>
    <property type="project" value="InterPro"/>
</dbReference>
<dbReference type="CDD" id="cd11456">
    <property type="entry name" value="bHLHzip_N-Myc_like"/>
    <property type="match status" value="1"/>
</dbReference>
<dbReference type="FunFam" id="4.10.280.10:FF:000019">
    <property type="entry name" value="Myc proto-oncogene protein"/>
    <property type="match status" value="1"/>
</dbReference>
<dbReference type="Gene3D" id="4.10.280.10">
    <property type="entry name" value="Helix-loop-helix DNA-binding domain"/>
    <property type="match status" value="1"/>
</dbReference>
<dbReference type="InterPro" id="IPR011598">
    <property type="entry name" value="bHLH_dom"/>
</dbReference>
<dbReference type="InterPro" id="IPR036638">
    <property type="entry name" value="HLH_DNA-bd_sf"/>
</dbReference>
<dbReference type="InterPro" id="IPR050433">
    <property type="entry name" value="Myc_transcription_factors"/>
</dbReference>
<dbReference type="InterPro" id="IPR002418">
    <property type="entry name" value="Tscrpt_reg_Myc"/>
</dbReference>
<dbReference type="InterPro" id="IPR012682">
    <property type="entry name" value="Tscrpt_reg_Myc_N"/>
</dbReference>
<dbReference type="PANTHER" id="PTHR45851">
    <property type="entry name" value="MYC PROTO-ONCOGENE"/>
    <property type="match status" value="1"/>
</dbReference>
<dbReference type="Pfam" id="PF00010">
    <property type="entry name" value="HLH"/>
    <property type="match status" value="1"/>
</dbReference>
<dbReference type="Pfam" id="PF01056">
    <property type="entry name" value="Myc_N"/>
    <property type="match status" value="1"/>
</dbReference>
<dbReference type="PIRSF" id="PIRSF001705">
    <property type="entry name" value="Myc_protein"/>
    <property type="match status" value="1"/>
</dbReference>
<dbReference type="PRINTS" id="PR00044">
    <property type="entry name" value="LEUZIPPRMYC"/>
</dbReference>
<dbReference type="SMART" id="SM00353">
    <property type="entry name" value="HLH"/>
    <property type="match status" value="1"/>
</dbReference>
<dbReference type="SUPFAM" id="SSF47459">
    <property type="entry name" value="HLH, helix-loop-helix DNA-binding domain"/>
    <property type="match status" value="1"/>
</dbReference>
<dbReference type="PROSITE" id="PS50888">
    <property type="entry name" value="BHLH"/>
    <property type="match status" value="1"/>
</dbReference>
<sequence>MRSCTVSTMPRMICRNADLEFDWLQPCFYPDEDDFYFSGPNSTPPGEDIWKKFELLPTPPLSPSCAFLELSTEPSDWASEMMLTEADLWGNPDEEDVFGPGGLGSLTPNPVILRDCMWSGFSAREKLERAMSEKMQHGHEPAATGPATQVPGAGAASTAGRGHSGTAGAALPAELAHPAAECVDPAVVFLLPVSKRNPVPVRVAPARAPARAPAVGAAVARAAAPASAAVAAPPGLSSRPPNGGDHKVLSTSGEDALSDEVDEEEDEEEEIDVVTVEKSCKTGGTTFTLTVSPKNTALGLRREQSRELILQRSVPIYQQHNYAAPSPYVENEDAPPQKKIKREVSPHPLKSVIHPKGKSFSPRKSDSEDSVRRRNHNILERQRRNDLRSSFTTLRDHVPELVKNEKAAKVVILKKACEYVHYLQAKEHQLLMEKEKLQARQQQLLKIIELAWTF</sequence>